<sequence length="348" mass="38867">MKKWSRHLLAAGALALGMSAAHADDNNTLYFYNWTEYVPPGLLEQFTKETGIKVIYSTYESNETMYAKLKTYKDGAYDLVVPSTYYVDKMRKEGMIQKIDKSKLTNFSNLDPDMLNKPFDPNNDYSIPYIWGATAIGVNGDAVDPKSVTSWADLWKPEYKGSLLLTDDAREVFQMALRKLGYSGNTTDPKEIEAAYNELKKLMPNVAAFNSDNPANPYMEGEVNLGMIWNGSAFVARQAGTPIDVVWPKEGGIFWMDSLAIPANAKNKEGALKLINFLLRPDVAKQVAETIGYPTPNLAARKLLSPEVANDKTLYPDAETIKNGEWQNDVGAASSIYEEYYQKLKAGR</sequence>
<evidence type="ECO:0000250" key="1"/>
<evidence type="ECO:0000305" key="2"/>
<organism>
    <name type="scientific">Shigella flexneri</name>
    <dbReference type="NCBI Taxonomy" id="623"/>
    <lineage>
        <taxon>Bacteria</taxon>
        <taxon>Pseudomonadati</taxon>
        <taxon>Pseudomonadota</taxon>
        <taxon>Gammaproteobacteria</taxon>
        <taxon>Enterobacterales</taxon>
        <taxon>Enterobacteriaceae</taxon>
        <taxon>Shigella</taxon>
    </lineage>
</organism>
<gene>
    <name type="primary">potD</name>
    <name type="ordered locus">SF1125</name>
    <name type="ordered locus">S1205</name>
</gene>
<accession>P0AFL0</accession>
<accession>P23861</accession>
<feature type="signal peptide" evidence="1">
    <location>
        <begin position="1"/>
        <end position="23"/>
    </location>
</feature>
<feature type="chain" id="PRO_0000045118" description="Spermidine/putrescine-binding periplasmic protein">
    <location>
        <begin position="24"/>
        <end position="348"/>
    </location>
</feature>
<proteinExistence type="inferred from homology"/>
<dbReference type="EMBL" id="AE005674">
    <property type="protein sequence ID" value="AAN42743.1"/>
    <property type="molecule type" value="Genomic_DNA"/>
</dbReference>
<dbReference type="EMBL" id="AE014073">
    <property type="protein sequence ID" value="AAP16632.1"/>
    <property type="molecule type" value="Genomic_DNA"/>
</dbReference>
<dbReference type="RefSeq" id="NP_707036.1">
    <property type="nucleotide sequence ID" value="NC_004337.2"/>
</dbReference>
<dbReference type="RefSeq" id="WP_000759317.1">
    <property type="nucleotide sequence ID" value="NZ_WPGW01000001.1"/>
</dbReference>
<dbReference type="SMR" id="P0AFL0"/>
<dbReference type="STRING" id="198214.SF1125"/>
<dbReference type="PaxDb" id="198214-SF1125"/>
<dbReference type="GeneID" id="1024061"/>
<dbReference type="GeneID" id="86863622"/>
<dbReference type="KEGG" id="sfl:SF1125"/>
<dbReference type="KEGG" id="sfx:S1205"/>
<dbReference type="PATRIC" id="fig|198214.7.peg.1316"/>
<dbReference type="HOGENOM" id="CLU_026974_1_3_6"/>
<dbReference type="Proteomes" id="UP000001006">
    <property type="component" value="Chromosome"/>
</dbReference>
<dbReference type="Proteomes" id="UP000002673">
    <property type="component" value="Chromosome"/>
</dbReference>
<dbReference type="GO" id="GO:0030288">
    <property type="term" value="C:outer membrane-bounded periplasmic space"/>
    <property type="evidence" value="ECO:0007669"/>
    <property type="project" value="UniProtKB-ARBA"/>
</dbReference>
<dbReference type="GO" id="GO:0019808">
    <property type="term" value="F:polyamine binding"/>
    <property type="evidence" value="ECO:0007669"/>
    <property type="project" value="InterPro"/>
</dbReference>
<dbReference type="GO" id="GO:0015846">
    <property type="term" value="P:polyamine transport"/>
    <property type="evidence" value="ECO:0007669"/>
    <property type="project" value="InterPro"/>
</dbReference>
<dbReference type="CDD" id="cd13660">
    <property type="entry name" value="PBP2_PotD"/>
    <property type="match status" value="1"/>
</dbReference>
<dbReference type="FunFam" id="3.40.190.10:FF:000062">
    <property type="entry name" value="Putrescine-binding periplasmic protein"/>
    <property type="match status" value="1"/>
</dbReference>
<dbReference type="Gene3D" id="3.40.190.10">
    <property type="entry name" value="Periplasmic binding protein-like II"/>
    <property type="match status" value="2"/>
</dbReference>
<dbReference type="InterPro" id="IPR006059">
    <property type="entry name" value="SBP"/>
</dbReference>
<dbReference type="InterPro" id="IPR001188">
    <property type="entry name" value="Sperm_putr-bd"/>
</dbReference>
<dbReference type="NCBIfam" id="NF007048">
    <property type="entry name" value="PRK09501.1"/>
    <property type="match status" value="1"/>
</dbReference>
<dbReference type="PANTHER" id="PTHR30222">
    <property type="entry name" value="SPERMIDINE/PUTRESCINE-BINDING PERIPLASMIC PROTEIN"/>
    <property type="match status" value="1"/>
</dbReference>
<dbReference type="PANTHER" id="PTHR30222:SF17">
    <property type="entry name" value="SPERMIDINE_PUTRESCINE-BINDING PERIPLASMIC PROTEIN"/>
    <property type="match status" value="1"/>
</dbReference>
<dbReference type="Pfam" id="PF13416">
    <property type="entry name" value="SBP_bac_8"/>
    <property type="match status" value="1"/>
</dbReference>
<dbReference type="PIRSF" id="PIRSF019574">
    <property type="entry name" value="Periplasmic_polyamine_BP"/>
    <property type="match status" value="1"/>
</dbReference>
<dbReference type="PRINTS" id="PR00909">
    <property type="entry name" value="SPERMDNBNDNG"/>
</dbReference>
<dbReference type="SUPFAM" id="SSF53850">
    <property type="entry name" value="Periplasmic binding protein-like II"/>
    <property type="match status" value="1"/>
</dbReference>
<name>POTD_SHIFL</name>
<comment type="function">
    <text evidence="1">Required for the activity of the bacterial periplasmic transport system of putrescine and spermidine. Polyamine binding protein (By similarity).</text>
</comment>
<comment type="subcellular location">
    <subcellularLocation>
        <location evidence="1">Periplasm</location>
    </subcellularLocation>
</comment>
<comment type="similarity">
    <text evidence="2">Belongs to the bacterial solute-binding protein PotD/PotF family.</text>
</comment>
<reference key="1">
    <citation type="journal article" date="2002" name="Nucleic Acids Res.">
        <title>Genome sequence of Shigella flexneri 2a: insights into pathogenicity through comparison with genomes of Escherichia coli K12 and O157.</title>
        <authorList>
            <person name="Jin Q."/>
            <person name="Yuan Z."/>
            <person name="Xu J."/>
            <person name="Wang Y."/>
            <person name="Shen Y."/>
            <person name="Lu W."/>
            <person name="Wang J."/>
            <person name="Liu H."/>
            <person name="Yang J."/>
            <person name="Yang F."/>
            <person name="Zhang X."/>
            <person name="Zhang J."/>
            <person name="Yang G."/>
            <person name="Wu H."/>
            <person name="Qu D."/>
            <person name="Dong J."/>
            <person name="Sun L."/>
            <person name="Xue Y."/>
            <person name="Zhao A."/>
            <person name="Gao Y."/>
            <person name="Zhu J."/>
            <person name="Kan B."/>
            <person name="Ding K."/>
            <person name="Chen S."/>
            <person name="Cheng H."/>
            <person name="Yao Z."/>
            <person name="He B."/>
            <person name="Chen R."/>
            <person name="Ma D."/>
            <person name="Qiang B."/>
            <person name="Wen Y."/>
            <person name="Hou Y."/>
            <person name="Yu J."/>
        </authorList>
    </citation>
    <scope>NUCLEOTIDE SEQUENCE [LARGE SCALE GENOMIC DNA]</scope>
    <source>
        <strain>301 / Serotype 2a</strain>
    </source>
</reference>
<reference key="2">
    <citation type="journal article" date="2003" name="Infect. Immun.">
        <title>Complete genome sequence and comparative genomics of Shigella flexneri serotype 2a strain 2457T.</title>
        <authorList>
            <person name="Wei J."/>
            <person name="Goldberg M.B."/>
            <person name="Burland V."/>
            <person name="Venkatesan M.M."/>
            <person name="Deng W."/>
            <person name="Fournier G."/>
            <person name="Mayhew G.F."/>
            <person name="Plunkett G. III"/>
            <person name="Rose D.J."/>
            <person name="Darling A."/>
            <person name="Mau B."/>
            <person name="Perna N.T."/>
            <person name="Payne S.M."/>
            <person name="Runyen-Janecky L.J."/>
            <person name="Zhou S."/>
            <person name="Schwartz D.C."/>
            <person name="Blattner F.R."/>
        </authorList>
    </citation>
    <scope>NUCLEOTIDE SEQUENCE [LARGE SCALE GENOMIC DNA]</scope>
    <source>
        <strain>ATCC 700930 / 2457T / Serotype 2a</strain>
    </source>
</reference>
<protein>
    <recommendedName>
        <fullName>Spermidine/putrescine-binding periplasmic protein</fullName>
        <shortName>SPBP</shortName>
    </recommendedName>
</protein>
<keyword id="KW-0574">Periplasm</keyword>
<keyword id="KW-1185">Reference proteome</keyword>
<keyword id="KW-0732">Signal</keyword>
<keyword id="KW-0813">Transport</keyword>